<gene>
    <name type="primary">p27</name>
    <name type="ORF">4CL</name>
</gene>
<keyword id="KW-0479">Metal-binding</keyword>
<keyword id="KW-0862">Zinc</keyword>
<reference key="1">
    <citation type="journal article" date="1997" name="Virology">
        <title>A BIR motif containing gene of African swine fever virus, 4CL, is nonessential for growth in vitro and viral virulence.</title>
        <authorList>
            <person name="Neilan J.G."/>
            <person name="Lu Z."/>
            <person name="Kutish G.F."/>
            <person name="Zsak L."/>
            <person name="Burrage T.G."/>
            <person name="Borca M.V."/>
            <person name="Carrillo C."/>
            <person name="Rock D.L."/>
        </authorList>
    </citation>
    <scope>NUCLEOTIDE SEQUENCE [GENOMIC DNA]</scope>
</reference>
<sequence length="224" mass="26558">MFPKINTIDPYISLRLFEVKPKYVGYSSVDARNQSFAIHDIKNYEKFSNAGLFYTSPTEITCYCCGMKFCNWLYEKHPLQVHGFWSRNCGFMRATLGIIGLKKMIDSYNDYYNNEVFVKHKNRVYTHKKLEDMGFSKPFMQFILANAFIPPYRKYIHKIILNDRYFTFKFAAHLLSFHKVNLDNQTTYCMTCGIEPIKKDENFCNACKTLNYKHYKTLNFSVKL</sequence>
<name>IAPL_ASFC1</name>
<organism>
    <name type="scientific">African swine fever virus (isolate Tick/South Africa/Crocodile Cr1/1996)</name>
    <name type="common">ASFV</name>
    <dbReference type="NCBI Taxonomy" id="82810"/>
    <lineage>
        <taxon>Viruses</taxon>
        <taxon>Varidnaviria</taxon>
        <taxon>Bamfordvirae</taxon>
        <taxon>Nucleocytoviricota</taxon>
        <taxon>Pokkesviricetes</taxon>
        <taxon>Asfuvirales</taxon>
        <taxon>Asfarviridae</taxon>
        <taxon>Asfivirus</taxon>
        <taxon>African swine fever virus</taxon>
    </lineage>
</organism>
<organismHost>
    <name type="scientific">Ornithodoros</name>
    <name type="common">relapsing fever ticks</name>
    <dbReference type="NCBI Taxonomy" id="6937"/>
</organismHost>
<organismHost>
    <name type="scientific">Phacochoerus aethiopicus</name>
    <name type="common">Warthog</name>
    <dbReference type="NCBI Taxonomy" id="85517"/>
</organismHost>
<organismHost>
    <name type="scientific">Phacochoerus africanus</name>
    <name type="common">Warthog</name>
    <dbReference type="NCBI Taxonomy" id="41426"/>
</organismHost>
<organismHost>
    <name type="scientific">Potamochoerus larvatus</name>
    <name type="common">Bushpig</name>
    <dbReference type="NCBI Taxonomy" id="273792"/>
</organismHost>
<organismHost>
    <name type="scientific">Sus scrofa</name>
    <name type="common">Pig</name>
    <dbReference type="NCBI Taxonomy" id="9823"/>
</organismHost>
<protein>
    <recommendedName>
        <fullName>IAP-like protein p27</fullName>
    </recommendedName>
</protein>
<proteinExistence type="predicted"/>
<dbReference type="EMBL" id="U91731">
    <property type="protein sequence ID" value="AAB58386.1"/>
    <property type="molecule type" value="Genomic_DNA"/>
</dbReference>
<dbReference type="SMR" id="P68764"/>
<dbReference type="GO" id="GO:0046872">
    <property type="term" value="F:metal ion binding"/>
    <property type="evidence" value="ECO:0007669"/>
    <property type="project" value="UniProtKB-KW"/>
</dbReference>
<dbReference type="CDD" id="cd00022">
    <property type="entry name" value="BIR"/>
    <property type="match status" value="1"/>
</dbReference>
<dbReference type="FunFam" id="1.10.1170.10:FF:000014">
    <property type="entry name" value="IAP-like protein p27"/>
    <property type="match status" value="1"/>
</dbReference>
<dbReference type="Gene3D" id="1.10.1170.10">
    <property type="entry name" value="Inhibitor Of Apoptosis Protein (2mihbC-IAP-1), Chain A"/>
    <property type="match status" value="1"/>
</dbReference>
<dbReference type="InterPro" id="IPR010549">
    <property type="entry name" value="ASFV_p27_C"/>
</dbReference>
<dbReference type="InterPro" id="IPR001370">
    <property type="entry name" value="BIR_rpt"/>
</dbReference>
<dbReference type="Pfam" id="PF06556">
    <property type="entry name" value="ASFV_p27"/>
    <property type="match status" value="1"/>
</dbReference>
<dbReference type="Pfam" id="PF00653">
    <property type="entry name" value="BIR"/>
    <property type="match status" value="1"/>
</dbReference>
<dbReference type="SMART" id="SM00238">
    <property type="entry name" value="BIR"/>
    <property type="match status" value="1"/>
</dbReference>
<dbReference type="SUPFAM" id="SSF57924">
    <property type="entry name" value="Inhibitor of apoptosis (IAP) repeat"/>
    <property type="match status" value="1"/>
</dbReference>
<dbReference type="PROSITE" id="PS01282">
    <property type="entry name" value="BIR_REPEAT_1"/>
    <property type="match status" value="1"/>
</dbReference>
<dbReference type="PROSITE" id="PS50143">
    <property type="entry name" value="BIR_REPEAT_2"/>
    <property type="match status" value="1"/>
</dbReference>
<evidence type="ECO:0000255" key="1">
    <source>
        <dbReference type="PROSITE-ProRule" id="PRU00029"/>
    </source>
</evidence>
<accession>P68764</accession>
<accession>O12407</accession>
<comment type="function">
    <text>Not essential for growth or virulence. Does not have antiapoptotic function.</text>
</comment>
<feature type="chain" id="PRO_0000122374" description="IAP-like protein p27">
    <location>
        <begin position="1"/>
        <end position="224"/>
    </location>
</feature>
<feature type="repeat" description="BIR">
    <location>
        <begin position="29"/>
        <end position="92"/>
    </location>
</feature>
<feature type="binding site" evidence="1">
    <location>
        <position position="62"/>
    </location>
    <ligand>
        <name>Zn(2+)</name>
        <dbReference type="ChEBI" id="CHEBI:29105"/>
    </ligand>
</feature>
<feature type="binding site" evidence="1">
    <location>
        <position position="65"/>
    </location>
    <ligand>
        <name>Zn(2+)</name>
        <dbReference type="ChEBI" id="CHEBI:29105"/>
    </ligand>
</feature>
<feature type="binding site" evidence="1">
    <location>
        <position position="82"/>
    </location>
    <ligand>
        <name>Zn(2+)</name>
        <dbReference type="ChEBI" id="CHEBI:29105"/>
    </ligand>
</feature>
<feature type="binding site" evidence="1">
    <location>
        <position position="89"/>
    </location>
    <ligand>
        <name>Zn(2+)</name>
        <dbReference type="ChEBI" id="CHEBI:29105"/>
    </ligand>
</feature>